<protein>
    <recommendedName>
        <fullName evidence="1">Phosphate import ATP-binding protein PstB 1</fullName>
        <ecNumber evidence="1">7.3.2.1</ecNumber>
    </recommendedName>
    <alternativeName>
        <fullName evidence="1">ABC phosphate transporter 1</fullName>
    </alternativeName>
    <alternativeName>
        <fullName evidence="1">Phosphate-transporting ATPase 1</fullName>
    </alternativeName>
</protein>
<sequence>MGKEIISSKDLHLYYGKKEALKGIDLTFNQGELTAMIGPSGCGKSTYLRCLNRMNDLIPDVTITGSVVYKGKDIYGPKTDNVELRKEIGMVFQQPNPFPFSVYENVIYGLRLKGVKDKQVLDEAVETSLKAAAVWEDVKDKLHKSALSLSGGQQQRVCIARVLAVEPDIILLDEPTSALDPVSSGKIENMLLTLKEKYTMIMVTHNMSQASRISDKTAFFLQGDLIEFNDTKKVFLNPKEKQTEDYISGKFG</sequence>
<accession>Q834B4</accession>
<evidence type="ECO:0000255" key="1">
    <source>
        <dbReference type="HAMAP-Rule" id="MF_01702"/>
    </source>
</evidence>
<proteinExistence type="inferred from homology"/>
<feature type="chain" id="PRO_0000092815" description="Phosphate import ATP-binding protein PstB 1">
    <location>
        <begin position="1"/>
        <end position="252"/>
    </location>
</feature>
<feature type="domain" description="ABC transporter" evidence="1">
    <location>
        <begin position="6"/>
        <end position="247"/>
    </location>
</feature>
<feature type="binding site" evidence="1">
    <location>
        <begin position="38"/>
        <end position="45"/>
    </location>
    <ligand>
        <name>ATP</name>
        <dbReference type="ChEBI" id="CHEBI:30616"/>
    </ligand>
</feature>
<comment type="function">
    <text evidence="1">Part of the ABC transporter complex PstSACB involved in phosphate import. Responsible for energy coupling to the transport system.</text>
</comment>
<comment type="catalytic activity">
    <reaction evidence="1">
        <text>phosphate(out) + ATP + H2O = ADP + 2 phosphate(in) + H(+)</text>
        <dbReference type="Rhea" id="RHEA:24440"/>
        <dbReference type="ChEBI" id="CHEBI:15377"/>
        <dbReference type="ChEBI" id="CHEBI:15378"/>
        <dbReference type="ChEBI" id="CHEBI:30616"/>
        <dbReference type="ChEBI" id="CHEBI:43474"/>
        <dbReference type="ChEBI" id="CHEBI:456216"/>
        <dbReference type="EC" id="7.3.2.1"/>
    </reaction>
</comment>
<comment type="subunit">
    <text evidence="1">The complex is composed of two ATP-binding proteins (PstB), two transmembrane proteins (PstC and PstA) and a solute-binding protein (PstS).</text>
</comment>
<comment type="subcellular location">
    <subcellularLocation>
        <location evidence="1">Cell membrane</location>
        <topology evidence="1">Peripheral membrane protein</topology>
    </subcellularLocation>
</comment>
<comment type="similarity">
    <text evidence="1">Belongs to the ABC transporter superfamily. Phosphate importer (TC 3.A.1.7) family.</text>
</comment>
<name>PSTB1_ENTFA</name>
<dbReference type="EC" id="7.3.2.1" evidence="1"/>
<dbReference type="EMBL" id="AE016830">
    <property type="protein sequence ID" value="AAO81528.1"/>
    <property type="molecule type" value="Genomic_DNA"/>
</dbReference>
<dbReference type="RefSeq" id="NP_815458.1">
    <property type="nucleotide sequence ID" value="NC_004668.1"/>
</dbReference>
<dbReference type="SMR" id="Q834B4"/>
<dbReference type="STRING" id="226185.EF_1755"/>
<dbReference type="EnsemblBacteria" id="AAO81528">
    <property type="protein sequence ID" value="AAO81528"/>
    <property type="gene ID" value="EF_1755"/>
</dbReference>
<dbReference type="KEGG" id="efa:EF1755"/>
<dbReference type="PATRIC" id="fig|226185.45.peg.1760"/>
<dbReference type="eggNOG" id="COG1117">
    <property type="taxonomic scope" value="Bacteria"/>
</dbReference>
<dbReference type="HOGENOM" id="CLU_000604_1_22_9"/>
<dbReference type="Proteomes" id="UP000001415">
    <property type="component" value="Chromosome"/>
</dbReference>
<dbReference type="GO" id="GO:0005886">
    <property type="term" value="C:plasma membrane"/>
    <property type="evidence" value="ECO:0007669"/>
    <property type="project" value="UniProtKB-SubCell"/>
</dbReference>
<dbReference type="GO" id="GO:0005524">
    <property type="term" value="F:ATP binding"/>
    <property type="evidence" value="ECO:0007669"/>
    <property type="project" value="UniProtKB-KW"/>
</dbReference>
<dbReference type="GO" id="GO:0016887">
    <property type="term" value="F:ATP hydrolysis activity"/>
    <property type="evidence" value="ECO:0007669"/>
    <property type="project" value="InterPro"/>
</dbReference>
<dbReference type="GO" id="GO:0015415">
    <property type="term" value="F:ATPase-coupled phosphate ion transmembrane transporter activity"/>
    <property type="evidence" value="ECO:0007669"/>
    <property type="project" value="UniProtKB-EC"/>
</dbReference>
<dbReference type="GO" id="GO:0035435">
    <property type="term" value="P:phosphate ion transmembrane transport"/>
    <property type="evidence" value="ECO:0007669"/>
    <property type="project" value="InterPro"/>
</dbReference>
<dbReference type="CDD" id="cd03260">
    <property type="entry name" value="ABC_PstB_phosphate_transporter"/>
    <property type="match status" value="1"/>
</dbReference>
<dbReference type="Gene3D" id="3.40.50.300">
    <property type="entry name" value="P-loop containing nucleotide triphosphate hydrolases"/>
    <property type="match status" value="1"/>
</dbReference>
<dbReference type="InterPro" id="IPR003593">
    <property type="entry name" value="AAA+_ATPase"/>
</dbReference>
<dbReference type="InterPro" id="IPR003439">
    <property type="entry name" value="ABC_transporter-like_ATP-bd"/>
</dbReference>
<dbReference type="InterPro" id="IPR017871">
    <property type="entry name" value="ABC_transporter-like_CS"/>
</dbReference>
<dbReference type="InterPro" id="IPR027417">
    <property type="entry name" value="P-loop_NTPase"/>
</dbReference>
<dbReference type="InterPro" id="IPR005670">
    <property type="entry name" value="PstB-like"/>
</dbReference>
<dbReference type="NCBIfam" id="TIGR00972">
    <property type="entry name" value="3a0107s01c2"/>
    <property type="match status" value="1"/>
</dbReference>
<dbReference type="PANTHER" id="PTHR43423">
    <property type="entry name" value="ABC TRANSPORTER I FAMILY MEMBER 17"/>
    <property type="match status" value="1"/>
</dbReference>
<dbReference type="PANTHER" id="PTHR43423:SF1">
    <property type="entry name" value="ABC TRANSPORTER I FAMILY MEMBER 17"/>
    <property type="match status" value="1"/>
</dbReference>
<dbReference type="Pfam" id="PF00005">
    <property type="entry name" value="ABC_tran"/>
    <property type="match status" value="1"/>
</dbReference>
<dbReference type="SMART" id="SM00382">
    <property type="entry name" value="AAA"/>
    <property type="match status" value="1"/>
</dbReference>
<dbReference type="SUPFAM" id="SSF52540">
    <property type="entry name" value="P-loop containing nucleoside triphosphate hydrolases"/>
    <property type="match status" value="1"/>
</dbReference>
<dbReference type="PROSITE" id="PS00211">
    <property type="entry name" value="ABC_TRANSPORTER_1"/>
    <property type="match status" value="1"/>
</dbReference>
<dbReference type="PROSITE" id="PS50893">
    <property type="entry name" value="ABC_TRANSPORTER_2"/>
    <property type="match status" value="1"/>
</dbReference>
<dbReference type="PROSITE" id="PS51238">
    <property type="entry name" value="PSTB"/>
    <property type="match status" value="1"/>
</dbReference>
<keyword id="KW-0067">ATP-binding</keyword>
<keyword id="KW-1003">Cell membrane</keyword>
<keyword id="KW-0472">Membrane</keyword>
<keyword id="KW-0547">Nucleotide-binding</keyword>
<keyword id="KW-0592">Phosphate transport</keyword>
<keyword id="KW-1185">Reference proteome</keyword>
<keyword id="KW-1278">Translocase</keyword>
<keyword id="KW-0813">Transport</keyword>
<gene>
    <name evidence="1" type="primary">pstB1</name>
    <name type="ordered locus">EF_1755</name>
</gene>
<organism>
    <name type="scientific">Enterococcus faecalis (strain ATCC 700802 / V583)</name>
    <dbReference type="NCBI Taxonomy" id="226185"/>
    <lineage>
        <taxon>Bacteria</taxon>
        <taxon>Bacillati</taxon>
        <taxon>Bacillota</taxon>
        <taxon>Bacilli</taxon>
        <taxon>Lactobacillales</taxon>
        <taxon>Enterococcaceae</taxon>
        <taxon>Enterococcus</taxon>
    </lineage>
</organism>
<reference key="1">
    <citation type="journal article" date="2003" name="Science">
        <title>Role of mobile DNA in the evolution of vancomycin-resistant Enterococcus faecalis.</title>
        <authorList>
            <person name="Paulsen I.T."/>
            <person name="Banerjei L."/>
            <person name="Myers G.S.A."/>
            <person name="Nelson K.E."/>
            <person name="Seshadri R."/>
            <person name="Read T.D."/>
            <person name="Fouts D.E."/>
            <person name="Eisen J.A."/>
            <person name="Gill S.R."/>
            <person name="Heidelberg J.F."/>
            <person name="Tettelin H."/>
            <person name="Dodson R.J."/>
            <person name="Umayam L.A."/>
            <person name="Brinkac L.M."/>
            <person name="Beanan M.J."/>
            <person name="Daugherty S.C."/>
            <person name="DeBoy R.T."/>
            <person name="Durkin S.A."/>
            <person name="Kolonay J.F."/>
            <person name="Madupu R."/>
            <person name="Nelson W.C."/>
            <person name="Vamathevan J.J."/>
            <person name="Tran B."/>
            <person name="Upton J."/>
            <person name="Hansen T."/>
            <person name="Shetty J."/>
            <person name="Khouri H.M."/>
            <person name="Utterback T.R."/>
            <person name="Radune D."/>
            <person name="Ketchum K.A."/>
            <person name="Dougherty B.A."/>
            <person name="Fraser C.M."/>
        </authorList>
    </citation>
    <scope>NUCLEOTIDE SEQUENCE [LARGE SCALE GENOMIC DNA]</scope>
    <source>
        <strain>ATCC 700802 / V583</strain>
    </source>
</reference>